<comment type="catalytic activity">
    <reaction evidence="1">
        <text>L-arginine + H(+) = agmatine + CO2</text>
        <dbReference type="Rhea" id="RHEA:17641"/>
        <dbReference type="ChEBI" id="CHEBI:15378"/>
        <dbReference type="ChEBI" id="CHEBI:16526"/>
        <dbReference type="ChEBI" id="CHEBI:32682"/>
        <dbReference type="ChEBI" id="CHEBI:58145"/>
        <dbReference type="EC" id="4.1.1.19"/>
    </reaction>
</comment>
<comment type="cofactor">
    <cofactor evidence="1">
        <name>pyruvate</name>
        <dbReference type="ChEBI" id="CHEBI:15361"/>
    </cofactor>
    <text evidence="1">Binds 1 pyruvoyl group covalently per subunit.</text>
</comment>
<comment type="similarity">
    <text evidence="1">Belongs to the PdaD family.</text>
</comment>
<feature type="chain" id="PRO_1000068393" description="Pyruvoyl-dependent arginine decarboxylase subunit beta" evidence="1">
    <location>
        <begin position="1"/>
        <end position="40"/>
    </location>
</feature>
<feature type="chain" id="PRO_1000068394" description="Pyruvoyl-dependent arginine decarboxylase subunit alpha" evidence="1">
    <location>
        <begin position="41"/>
        <end position="180"/>
    </location>
</feature>
<feature type="site" description="Cleavage (non-hydrolytic)" evidence="1">
    <location>
        <begin position="40"/>
        <end position="41"/>
    </location>
</feature>
<feature type="modified residue" description="Pyruvic acid (Ser)" evidence="1">
    <location>
        <position position="41"/>
    </location>
</feature>
<sequence>MIPKKAFVVKGTGVHKDKLASFELALRDAGIEKFNLVTVSSILPPNCSIVSRKEGLEELAPGQIVYCVMAKNQTNEPERMIAAAIGNAVPVDSNDYGYISEHHSFGEDERTAGIYAEDLAATMLATTLGIEFDADSAWGERERVYKASGHIFDTVHYCRCVKGDENGLWTTVVVSMVFVL</sequence>
<evidence type="ECO:0000255" key="1">
    <source>
        <dbReference type="HAMAP-Rule" id="MF_01404"/>
    </source>
</evidence>
<reference key="1">
    <citation type="journal article" date="2009" name="ISME J.">
        <title>The genome sequence of the psychrophilic archaeon, Methanococcoides burtonii: the role of genome evolution in cold adaptation.</title>
        <authorList>
            <person name="Allen M.A."/>
            <person name="Lauro F.M."/>
            <person name="Williams T.J."/>
            <person name="Burg D."/>
            <person name="Siddiqui K.S."/>
            <person name="De Francisci D."/>
            <person name="Chong K.W."/>
            <person name="Pilak O."/>
            <person name="Chew H.H."/>
            <person name="De Maere M.Z."/>
            <person name="Ting L."/>
            <person name="Katrib M."/>
            <person name="Ng C."/>
            <person name="Sowers K.R."/>
            <person name="Galperin M.Y."/>
            <person name="Anderson I.J."/>
            <person name="Ivanova N."/>
            <person name="Dalin E."/>
            <person name="Martinez M."/>
            <person name="Lapidus A."/>
            <person name="Hauser L."/>
            <person name="Land M."/>
            <person name="Thomas T."/>
            <person name="Cavicchioli R."/>
        </authorList>
    </citation>
    <scope>NUCLEOTIDE SEQUENCE [LARGE SCALE GENOMIC DNA]</scope>
    <source>
        <strain>DSM 6242 / NBRC 107633 / OCM 468 / ACE-M</strain>
    </source>
</reference>
<keyword id="KW-0210">Decarboxylase</keyword>
<keyword id="KW-0456">Lyase</keyword>
<keyword id="KW-0670">Pyruvate</keyword>
<gene>
    <name evidence="1" type="primary">pdaD</name>
    <name type="ordered locus">Mbur_1870</name>
</gene>
<dbReference type="EC" id="4.1.1.19" evidence="1"/>
<dbReference type="EMBL" id="CP000300">
    <property type="protein sequence ID" value="ABE52753.1"/>
    <property type="molecule type" value="Genomic_DNA"/>
</dbReference>
<dbReference type="RefSeq" id="WP_011499896.1">
    <property type="nucleotide sequence ID" value="NC_007955.1"/>
</dbReference>
<dbReference type="SMR" id="Q12UX3"/>
<dbReference type="STRING" id="259564.Mbur_1870"/>
<dbReference type="GeneID" id="3997531"/>
<dbReference type="KEGG" id="mbu:Mbur_1870"/>
<dbReference type="HOGENOM" id="CLU_114389_0_0_2"/>
<dbReference type="OrthoDB" id="30748at2157"/>
<dbReference type="Proteomes" id="UP000001979">
    <property type="component" value="Chromosome"/>
</dbReference>
<dbReference type="GO" id="GO:0008792">
    <property type="term" value="F:arginine decarboxylase activity"/>
    <property type="evidence" value="ECO:0007669"/>
    <property type="project" value="UniProtKB-UniRule"/>
</dbReference>
<dbReference type="GO" id="GO:0006527">
    <property type="term" value="P:arginine catabolic process"/>
    <property type="evidence" value="ECO:0007669"/>
    <property type="project" value="InterPro"/>
</dbReference>
<dbReference type="Gene3D" id="3.50.20.10">
    <property type="entry name" value="Pyruvoyl-Dependent Histidine Decarboxylase, subunit B"/>
    <property type="match status" value="1"/>
</dbReference>
<dbReference type="HAMAP" id="MF_01404">
    <property type="entry name" value="PvlArgDC"/>
    <property type="match status" value="1"/>
</dbReference>
<dbReference type="InterPro" id="IPR016104">
    <property type="entry name" value="Pyr-dep_his/arg-deCO2ase"/>
</dbReference>
<dbReference type="InterPro" id="IPR016105">
    <property type="entry name" value="Pyr-dep_his/arg-deCO2ase_sand"/>
</dbReference>
<dbReference type="InterPro" id="IPR002724">
    <property type="entry name" value="Pyruvoyl-dep_arg_deCO2ase"/>
</dbReference>
<dbReference type="NCBIfam" id="TIGR00286">
    <property type="entry name" value="pyruvoyl-dependent arginine decarboxylase"/>
    <property type="match status" value="1"/>
</dbReference>
<dbReference type="PANTHER" id="PTHR40438">
    <property type="entry name" value="PYRUVOYL-DEPENDENT ARGININE DECARBOXYLASE"/>
    <property type="match status" value="1"/>
</dbReference>
<dbReference type="PANTHER" id="PTHR40438:SF1">
    <property type="entry name" value="PYRUVOYL-DEPENDENT ARGININE DECARBOXYLASE"/>
    <property type="match status" value="1"/>
</dbReference>
<dbReference type="Pfam" id="PF01862">
    <property type="entry name" value="PvlArgDC"/>
    <property type="match status" value="1"/>
</dbReference>
<dbReference type="PIRSF" id="PIRSF005216">
    <property type="entry name" value="Pyruvoyl-dep_arg_deCO2ase"/>
    <property type="match status" value="1"/>
</dbReference>
<dbReference type="SFLD" id="SFLDG01170">
    <property type="entry name" value="Pyruvoyl-dependent_arginine_de"/>
    <property type="match status" value="1"/>
</dbReference>
<dbReference type="SFLD" id="SFLDS00055">
    <property type="entry name" value="Pyruvoyl-Dependent_Histidine/A"/>
    <property type="match status" value="1"/>
</dbReference>
<dbReference type="SUPFAM" id="SSF56271">
    <property type="entry name" value="Pyruvoyl-dependent histidine and arginine decarboxylases"/>
    <property type="match status" value="1"/>
</dbReference>
<name>PDAD_METBU</name>
<proteinExistence type="inferred from homology"/>
<organism>
    <name type="scientific">Methanococcoides burtonii (strain DSM 6242 / NBRC 107633 / OCM 468 / ACE-M)</name>
    <dbReference type="NCBI Taxonomy" id="259564"/>
    <lineage>
        <taxon>Archaea</taxon>
        <taxon>Methanobacteriati</taxon>
        <taxon>Methanobacteriota</taxon>
        <taxon>Stenosarchaea group</taxon>
        <taxon>Methanomicrobia</taxon>
        <taxon>Methanosarcinales</taxon>
        <taxon>Methanosarcinaceae</taxon>
        <taxon>Methanococcoides</taxon>
    </lineage>
</organism>
<accession>Q12UX3</accession>
<protein>
    <recommendedName>
        <fullName evidence="1">Pyruvoyl-dependent arginine decarboxylase</fullName>
        <shortName evidence="1">PvlArgDC</shortName>
        <ecNumber evidence="1">4.1.1.19</ecNumber>
    </recommendedName>
    <component>
        <recommendedName>
            <fullName evidence="1">Pyruvoyl-dependent arginine decarboxylase subunit beta</fullName>
        </recommendedName>
    </component>
    <component>
        <recommendedName>
            <fullName evidence="1">Pyruvoyl-dependent arginine decarboxylase subunit alpha</fullName>
        </recommendedName>
    </component>
</protein>